<comment type="caution">
    <text evidence="1">Product of a dubious CDS prediction.</text>
</comment>
<protein>
    <recommendedName>
        <fullName>Putative uncharacterized protein FLJ44553</fullName>
    </recommendedName>
</protein>
<organism>
    <name type="scientific">Homo sapiens</name>
    <name type="common">Human</name>
    <dbReference type="NCBI Taxonomy" id="9606"/>
    <lineage>
        <taxon>Eukaryota</taxon>
        <taxon>Metazoa</taxon>
        <taxon>Chordata</taxon>
        <taxon>Craniata</taxon>
        <taxon>Vertebrata</taxon>
        <taxon>Euteleostomi</taxon>
        <taxon>Mammalia</taxon>
        <taxon>Eutheria</taxon>
        <taxon>Euarchontoglires</taxon>
        <taxon>Primates</taxon>
        <taxon>Haplorrhini</taxon>
        <taxon>Catarrhini</taxon>
        <taxon>Hominidae</taxon>
        <taxon>Homo</taxon>
    </lineage>
</organism>
<feature type="chain" id="PRO_0000342587" description="Putative uncharacterized protein FLJ44553">
    <location>
        <begin position="1"/>
        <end position="180"/>
    </location>
</feature>
<feature type="sequence conflict" description="In Ref. 2; CAD89931." evidence="1" ref="2">
    <original>V</original>
    <variation>A</variation>
    <location>
        <position position="179"/>
    </location>
</feature>
<dbReference type="EMBL" id="AK126517">
    <property type="status" value="NOT_ANNOTATED_CDS"/>
    <property type="molecule type" value="mRNA"/>
</dbReference>
<dbReference type="EMBL" id="AL833088">
    <property type="protein sequence ID" value="CAD89931.1"/>
    <property type="molecule type" value="mRNA"/>
</dbReference>
<dbReference type="IntAct" id="Q86TA4">
    <property type="interactions" value="1"/>
</dbReference>
<dbReference type="GlyGen" id="Q86TA4">
    <property type="glycosylation" value="1 site"/>
</dbReference>
<dbReference type="BioMuta" id="-"/>
<dbReference type="jPOST" id="Q86TA4"/>
<dbReference type="PeptideAtlas" id="Q86TA4"/>
<dbReference type="neXtProt" id="NX_Q86TA4"/>
<dbReference type="InParanoid" id="Q86TA4"/>
<dbReference type="PAN-GO" id="Q86TA4">
    <property type="GO annotations" value="0 GO annotations based on evolutionary models"/>
</dbReference>
<dbReference type="PathwayCommons" id="Q86TA4"/>
<dbReference type="Pharos" id="Q86TA4">
    <property type="development level" value="Tdark"/>
</dbReference>
<dbReference type="Proteomes" id="UP000005640">
    <property type="component" value="Unplaced"/>
</dbReference>
<dbReference type="RNAct" id="Q86TA4">
    <property type="molecule type" value="protein"/>
</dbReference>
<accession>Q86TA4</accession>
<reference key="1">
    <citation type="journal article" date="2004" name="Nat. Genet.">
        <title>Complete sequencing and characterization of 21,243 full-length human cDNAs.</title>
        <authorList>
            <person name="Ota T."/>
            <person name="Suzuki Y."/>
            <person name="Nishikawa T."/>
            <person name="Otsuki T."/>
            <person name="Sugiyama T."/>
            <person name="Irie R."/>
            <person name="Wakamatsu A."/>
            <person name="Hayashi K."/>
            <person name="Sato H."/>
            <person name="Nagai K."/>
            <person name="Kimura K."/>
            <person name="Makita H."/>
            <person name="Sekine M."/>
            <person name="Obayashi M."/>
            <person name="Nishi T."/>
            <person name="Shibahara T."/>
            <person name="Tanaka T."/>
            <person name="Ishii S."/>
            <person name="Yamamoto J."/>
            <person name="Saito K."/>
            <person name="Kawai Y."/>
            <person name="Isono Y."/>
            <person name="Nakamura Y."/>
            <person name="Nagahari K."/>
            <person name="Murakami K."/>
            <person name="Yasuda T."/>
            <person name="Iwayanagi T."/>
            <person name="Wagatsuma M."/>
            <person name="Shiratori A."/>
            <person name="Sudo H."/>
            <person name="Hosoiri T."/>
            <person name="Kaku Y."/>
            <person name="Kodaira H."/>
            <person name="Kondo H."/>
            <person name="Sugawara M."/>
            <person name="Takahashi M."/>
            <person name="Kanda K."/>
            <person name="Yokoi T."/>
            <person name="Furuya T."/>
            <person name="Kikkawa E."/>
            <person name="Omura Y."/>
            <person name="Abe K."/>
            <person name="Kamihara K."/>
            <person name="Katsuta N."/>
            <person name="Sato K."/>
            <person name="Tanikawa M."/>
            <person name="Yamazaki M."/>
            <person name="Ninomiya K."/>
            <person name="Ishibashi T."/>
            <person name="Yamashita H."/>
            <person name="Murakawa K."/>
            <person name="Fujimori K."/>
            <person name="Tanai H."/>
            <person name="Kimata M."/>
            <person name="Watanabe M."/>
            <person name="Hiraoka S."/>
            <person name="Chiba Y."/>
            <person name="Ishida S."/>
            <person name="Ono Y."/>
            <person name="Takiguchi S."/>
            <person name="Watanabe S."/>
            <person name="Yosida M."/>
            <person name="Hotuta T."/>
            <person name="Kusano J."/>
            <person name="Kanehori K."/>
            <person name="Takahashi-Fujii A."/>
            <person name="Hara H."/>
            <person name="Tanase T.-O."/>
            <person name="Nomura Y."/>
            <person name="Togiya S."/>
            <person name="Komai F."/>
            <person name="Hara R."/>
            <person name="Takeuchi K."/>
            <person name="Arita M."/>
            <person name="Imose N."/>
            <person name="Musashino K."/>
            <person name="Yuuki H."/>
            <person name="Oshima A."/>
            <person name="Sasaki N."/>
            <person name="Aotsuka S."/>
            <person name="Yoshikawa Y."/>
            <person name="Matsunawa H."/>
            <person name="Ichihara T."/>
            <person name="Shiohata N."/>
            <person name="Sano S."/>
            <person name="Moriya S."/>
            <person name="Momiyama H."/>
            <person name="Satoh N."/>
            <person name="Takami S."/>
            <person name="Terashima Y."/>
            <person name="Suzuki O."/>
            <person name="Nakagawa S."/>
            <person name="Senoh A."/>
            <person name="Mizoguchi H."/>
            <person name="Goto Y."/>
            <person name="Shimizu F."/>
            <person name="Wakebe H."/>
            <person name="Hishigaki H."/>
            <person name="Watanabe T."/>
            <person name="Sugiyama A."/>
            <person name="Takemoto M."/>
            <person name="Kawakami B."/>
            <person name="Yamazaki M."/>
            <person name="Watanabe K."/>
            <person name="Kumagai A."/>
            <person name="Itakura S."/>
            <person name="Fukuzumi Y."/>
            <person name="Fujimori Y."/>
            <person name="Komiyama M."/>
            <person name="Tashiro H."/>
            <person name="Tanigami A."/>
            <person name="Fujiwara T."/>
            <person name="Ono T."/>
            <person name="Yamada K."/>
            <person name="Fujii Y."/>
            <person name="Ozaki K."/>
            <person name="Hirao M."/>
            <person name="Ohmori Y."/>
            <person name="Kawabata A."/>
            <person name="Hikiji T."/>
            <person name="Kobatake N."/>
            <person name="Inagaki H."/>
            <person name="Ikema Y."/>
            <person name="Okamoto S."/>
            <person name="Okitani R."/>
            <person name="Kawakami T."/>
            <person name="Noguchi S."/>
            <person name="Itoh T."/>
            <person name="Shigeta K."/>
            <person name="Senba T."/>
            <person name="Matsumura K."/>
            <person name="Nakajima Y."/>
            <person name="Mizuno T."/>
            <person name="Morinaga M."/>
            <person name="Sasaki M."/>
            <person name="Togashi T."/>
            <person name="Oyama M."/>
            <person name="Hata H."/>
            <person name="Watanabe M."/>
            <person name="Komatsu T."/>
            <person name="Mizushima-Sugano J."/>
            <person name="Satoh T."/>
            <person name="Shirai Y."/>
            <person name="Takahashi Y."/>
            <person name="Nakagawa K."/>
            <person name="Okumura K."/>
            <person name="Nagase T."/>
            <person name="Nomura N."/>
            <person name="Kikuchi H."/>
            <person name="Masuho Y."/>
            <person name="Yamashita R."/>
            <person name="Nakai K."/>
            <person name="Yada T."/>
            <person name="Nakamura Y."/>
            <person name="Ohara O."/>
            <person name="Isogai T."/>
            <person name="Sugano S."/>
        </authorList>
    </citation>
    <scope>NUCLEOTIDE SEQUENCE [LARGE SCALE MRNA]</scope>
    <source>
        <tissue>Uterus</tissue>
    </source>
</reference>
<reference key="2">
    <citation type="journal article" date="2007" name="BMC Genomics">
        <title>The full-ORF clone resource of the German cDNA consortium.</title>
        <authorList>
            <person name="Bechtel S."/>
            <person name="Rosenfelder H."/>
            <person name="Duda A."/>
            <person name="Schmidt C.P."/>
            <person name="Ernst U."/>
            <person name="Wellenreuther R."/>
            <person name="Mehrle A."/>
            <person name="Schuster C."/>
            <person name="Bahr A."/>
            <person name="Bloecker H."/>
            <person name="Heubner D."/>
            <person name="Hoerlein A."/>
            <person name="Michel G."/>
            <person name="Wedler H."/>
            <person name="Koehrer K."/>
            <person name="Ottenwaelder B."/>
            <person name="Poustka A."/>
            <person name="Wiemann S."/>
            <person name="Schupp I."/>
        </authorList>
    </citation>
    <scope>NUCLEOTIDE SEQUENCE [LARGE SCALE MRNA]</scope>
    <source>
        <tissue>Spinal cord</tissue>
    </source>
</reference>
<sequence length="180" mass="19528">MLEGVSNEFDHFGISLPLKICLHLGWDEGLVEGKVVRLGQGIGKSICSSCQLFEEAPTQMSTVPSGLPLPILMHLCLLPVCMAHLCPASPCYFGATPGSGKFCRLITYSHSSPQLAASLRHRGREVGKDLPYPGLCPLTFHPSFFPPVEGCVSSLPGKLLSPQTIFFQILWLYSKSSLVL</sequence>
<name>YB049_HUMAN</name>
<evidence type="ECO:0000305" key="1"/>
<proteinExistence type="uncertain"/>
<keyword id="KW-1185">Reference proteome</keyword>